<accession>Q81Y92</accession>
<accession>Q6HVI3</accession>
<accession>Q6KPQ5</accession>
<sequence>MVTTYLLFIVAYLLGSIPFALVVGKIGYGIDIREHGSGNLGGTNTFRTLGKKAGFTVTIADILKGTLATSLPMVFGLDIHPLWFGLAAVLGHVYPIFAKFRGGKAVATSAGVLLCYSPVVFAILAVVFFTLLFTTRYVSLSSMVTAVVAVIASIVTGDKIFIIAMCLLAGMVIYKHRANIGRIINKTEPKANFSKKQK</sequence>
<keyword id="KW-1003">Cell membrane</keyword>
<keyword id="KW-0444">Lipid biosynthesis</keyword>
<keyword id="KW-0443">Lipid metabolism</keyword>
<keyword id="KW-0472">Membrane</keyword>
<keyword id="KW-0594">Phospholipid biosynthesis</keyword>
<keyword id="KW-1208">Phospholipid metabolism</keyword>
<keyword id="KW-1185">Reference proteome</keyword>
<keyword id="KW-0808">Transferase</keyword>
<keyword id="KW-0812">Transmembrane</keyword>
<keyword id="KW-1133">Transmembrane helix</keyword>
<reference key="1">
    <citation type="journal article" date="2003" name="Nature">
        <title>The genome sequence of Bacillus anthracis Ames and comparison to closely related bacteria.</title>
        <authorList>
            <person name="Read T.D."/>
            <person name="Peterson S.N."/>
            <person name="Tourasse N.J."/>
            <person name="Baillie L.W."/>
            <person name="Paulsen I.T."/>
            <person name="Nelson K.E."/>
            <person name="Tettelin H."/>
            <person name="Fouts D.E."/>
            <person name="Eisen J.A."/>
            <person name="Gill S.R."/>
            <person name="Holtzapple E.K."/>
            <person name="Okstad O.A."/>
            <person name="Helgason E."/>
            <person name="Rilstone J."/>
            <person name="Wu M."/>
            <person name="Kolonay J.F."/>
            <person name="Beanan M.J."/>
            <person name="Dodson R.J."/>
            <person name="Brinkac L.M."/>
            <person name="Gwinn M.L."/>
            <person name="DeBoy R.T."/>
            <person name="Madpu R."/>
            <person name="Daugherty S.C."/>
            <person name="Durkin A.S."/>
            <person name="Haft D.H."/>
            <person name="Nelson W.C."/>
            <person name="Peterson J.D."/>
            <person name="Pop M."/>
            <person name="Khouri H.M."/>
            <person name="Radune D."/>
            <person name="Benton J.L."/>
            <person name="Mahamoud Y."/>
            <person name="Jiang L."/>
            <person name="Hance I.R."/>
            <person name="Weidman J.F."/>
            <person name="Berry K.J."/>
            <person name="Plaut R.D."/>
            <person name="Wolf A.M."/>
            <person name="Watkins K.L."/>
            <person name="Nierman W.C."/>
            <person name="Hazen A."/>
            <person name="Cline R.T."/>
            <person name="Redmond C."/>
            <person name="Thwaite J.E."/>
            <person name="White O."/>
            <person name="Salzberg S.L."/>
            <person name="Thomason B."/>
            <person name="Friedlander A.M."/>
            <person name="Koehler T.M."/>
            <person name="Hanna P.C."/>
            <person name="Kolstoe A.-B."/>
            <person name="Fraser C.M."/>
        </authorList>
    </citation>
    <scope>NUCLEOTIDE SEQUENCE [LARGE SCALE GENOMIC DNA]</scope>
    <source>
        <strain>Ames / isolate Porton</strain>
    </source>
</reference>
<reference key="2">
    <citation type="journal article" date="2009" name="J. Bacteriol.">
        <title>The complete genome sequence of Bacillus anthracis Ames 'Ancestor'.</title>
        <authorList>
            <person name="Ravel J."/>
            <person name="Jiang L."/>
            <person name="Stanley S.T."/>
            <person name="Wilson M.R."/>
            <person name="Decker R.S."/>
            <person name="Read T.D."/>
            <person name="Worsham P."/>
            <person name="Keim P.S."/>
            <person name="Salzberg S.L."/>
            <person name="Fraser-Liggett C.M."/>
            <person name="Rasko D.A."/>
        </authorList>
    </citation>
    <scope>NUCLEOTIDE SEQUENCE [LARGE SCALE GENOMIC DNA]</scope>
    <source>
        <strain>Ames ancestor</strain>
    </source>
</reference>
<reference key="3">
    <citation type="submission" date="2004-01" db="EMBL/GenBank/DDBJ databases">
        <title>Complete genome sequence of Bacillus anthracis Sterne.</title>
        <authorList>
            <person name="Brettin T.S."/>
            <person name="Bruce D."/>
            <person name="Challacombe J.F."/>
            <person name="Gilna P."/>
            <person name="Han C."/>
            <person name="Hill K."/>
            <person name="Hitchcock P."/>
            <person name="Jackson P."/>
            <person name="Keim P."/>
            <person name="Longmire J."/>
            <person name="Lucas S."/>
            <person name="Okinaka R."/>
            <person name="Richardson P."/>
            <person name="Rubin E."/>
            <person name="Tice H."/>
        </authorList>
    </citation>
    <scope>NUCLEOTIDE SEQUENCE [LARGE SCALE GENOMIC DNA]</scope>
    <source>
        <strain>Sterne</strain>
    </source>
</reference>
<organism>
    <name type="scientific">Bacillus anthracis</name>
    <dbReference type="NCBI Taxonomy" id="1392"/>
    <lineage>
        <taxon>Bacteria</taxon>
        <taxon>Bacillati</taxon>
        <taxon>Bacillota</taxon>
        <taxon>Bacilli</taxon>
        <taxon>Bacillales</taxon>
        <taxon>Bacillaceae</taxon>
        <taxon>Bacillus</taxon>
        <taxon>Bacillus cereus group</taxon>
    </lineage>
</organism>
<gene>
    <name evidence="1" type="primary">plsY3</name>
    <name type="ordered locus">BA_3665</name>
    <name type="ordered locus">GBAA_3665</name>
    <name type="ordered locus">BAS3399</name>
</gene>
<feature type="chain" id="PRO_0000188316" description="Glycerol-3-phosphate acyltransferase 3">
    <location>
        <begin position="1"/>
        <end position="198"/>
    </location>
</feature>
<feature type="transmembrane region" description="Helical" evidence="1">
    <location>
        <begin position="4"/>
        <end position="24"/>
    </location>
</feature>
<feature type="transmembrane region" description="Helical" evidence="1">
    <location>
        <begin position="71"/>
        <end position="91"/>
    </location>
</feature>
<feature type="transmembrane region" description="Helical" evidence="1">
    <location>
        <begin position="113"/>
        <end position="133"/>
    </location>
</feature>
<feature type="transmembrane region" description="Helical" evidence="1">
    <location>
        <begin position="147"/>
        <end position="167"/>
    </location>
</feature>
<dbReference type="EC" id="2.3.1.275" evidence="1"/>
<dbReference type="EMBL" id="AE016879">
    <property type="protein sequence ID" value="AAP27414.1"/>
    <property type="molecule type" value="Genomic_DNA"/>
</dbReference>
<dbReference type="EMBL" id="AE017334">
    <property type="protein sequence ID" value="AAT32774.1"/>
    <property type="molecule type" value="Genomic_DNA"/>
</dbReference>
<dbReference type="EMBL" id="AE017225">
    <property type="protein sequence ID" value="AAT55706.1"/>
    <property type="molecule type" value="Genomic_DNA"/>
</dbReference>
<dbReference type="RefSeq" id="NP_845928.1">
    <property type="nucleotide sequence ID" value="NC_003997.3"/>
</dbReference>
<dbReference type="RefSeq" id="YP_029655.1">
    <property type="nucleotide sequence ID" value="NC_005945.1"/>
</dbReference>
<dbReference type="SMR" id="Q81Y92"/>
<dbReference type="STRING" id="261594.GBAA_3665"/>
<dbReference type="DNASU" id="1086107"/>
<dbReference type="GeneID" id="45023387"/>
<dbReference type="KEGG" id="ban:BA_3665"/>
<dbReference type="KEGG" id="banh:HYU01_17905"/>
<dbReference type="KEGG" id="bar:GBAA_3665"/>
<dbReference type="KEGG" id="bat:BAS3399"/>
<dbReference type="PATRIC" id="fig|198094.11.peg.3636"/>
<dbReference type="eggNOG" id="COG0344">
    <property type="taxonomic scope" value="Bacteria"/>
</dbReference>
<dbReference type="HOGENOM" id="CLU_081254_4_0_9"/>
<dbReference type="OMA" id="PVWLGFK"/>
<dbReference type="OrthoDB" id="9777124at2"/>
<dbReference type="UniPathway" id="UPA00085"/>
<dbReference type="Proteomes" id="UP000000427">
    <property type="component" value="Chromosome"/>
</dbReference>
<dbReference type="Proteomes" id="UP000000594">
    <property type="component" value="Chromosome"/>
</dbReference>
<dbReference type="GO" id="GO:0005886">
    <property type="term" value="C:plasma membrane"/>
    <property type="evidence" value="ECO:0007669"/>
    <property type="project" value="UniProtKB-SubCell"/>
</dbReference>
<dbReference type="GO" id="GO:0043772">
    <property type="term" value="F:acyl-phosphate glycerol-3-phosphate acyltransferase activity"/>
    <property type="evidence" value="ECO:0007669"/>
    <property type="project" value="UniProtKB-UniRule"/>
</dbReference>
<dbReference type="GO" id="GO:0008654">
    <property type="term" value="P:phospholipid biosynthetic process"/>
    <property type="evidence" value="ECO:0007669"/>
    <property type="project" value="UniProtKB-UniRule"/>
</dbReference>
<dbReference type="HAMAP" id="MF_01043">
    <property type="entry name" value="PlsY"/>
    <property type="match status" value="1"/>
</dbReference>
<dbReference type="InterPro" id="IPR003811">
    <property type="entry name" value="G3P_acylTferase_PlsY"/>
</dbReference>
<dbReference type="NCBIfam" id="TIGR00023">
    <property type="entry name" value="glycerol-3-phosphate 1-O-acyltransferase PlsY"/>
    <property type="match status" value="1"/>
</dbReference>
<dbReference type="PANTHER" id="PTHR30309:SF0">
    <property type="entry name" value="GLYCEROL-3-PHOSPHATE ACYLTRANSFERASE-RELATED"/>
    <property type="match status" value="1"/>
</dbReference>
<dbReference type="PANTHER" id="PTHR30309">
    <property type="entry name" value="INNER MEMBRANE PROTEIN YGIH"/>
    <property type="match status" value="1"/>
</dbReference>
<dbReference type="Pfam" id="PF02660">
    <property type="entry name" value="G3P_acyltransf"/>
    <property type="match status" value="1"/>
</dbReference>
<dbReference type="SMART" id="SM01207">
    <property type="entry name" value="G3P_acyltransf"/>
    <property type="match status" value="1"/>
</dbReference>
<name>PLSY3_BACAN</name>
<protein>
    <recommendedName>
        <fullName evidence="1">Glycerol-3-phosphate acyltransferase 3</fullName>
    </recommendedName>
    <alternativeName>
        <fullName evidence="1">Acyl-PO4 G3P acyltransferase 3</fullName>
    </alternativeName>
    <alternativeName>
        <fullName evidence="1">Acyl-phosphate--glycerol-3-phosphate acyltransferase 3</fullName>
    </alternativeName>
    <alternativeName>
        <fullName evidence="1">G3P acyltransferase 3</fullName>
        <shortName evidence="1">GPAT 3</shortName>
        <ecNumber evidence="1">2.3.1.275</ecNumber>
    </alternativeName>
    <alternativeName>
        <fullName evidence="1">Lysophosphatidic acid synthase 3</fullName>
        <shortName evidence="1">LPA synthase 3</shortName>
    </alternativeName>
</protein>
<evidence type="ECO:0000255" key="1">
    <source>
        <dbReference type="HAMAP-Rule" id="MF_01043"/>
    </source>
</evidence>
<proteinExistence type="inferred from homology"/>
<comment type="function">
    <text evidence="1">Catalyzes the transfer of an acyl group from acyl-phosphate (acyl-PO(4)) to glycerol-3-phosphate (G3P) to form lysophosphatidic acid (LPA). This enzyme utilizes acyl-phosphate as fatty acyl donor, but not acyl-CoA or acyl-ACP.</text>
</comment>
<comment type="catalytic activity">
    <reaction evidence="1">
        <text>an acyl phosphate + sn-glycerol 3-phosphate = a 1-acyl-sn-glycero-3-phosphate + phosphate</text>
        <dbReference type="Rhea" id="RHEA:34075"/>
        <dbReference type="ChEBI" id="CHEBI:43474"/>
        <dbReference type="ChEBI" id="CHEBI:57597"/>
        <dbReference type="ChEBI" id="CHEBI:57970"/>
        <dbReference type="ChEBI" id="CHEBI:59918"/>
        <dbReference type="EC" id="2.3.1.275"/>
    </reaction>
</comment>
<comment type="pathway">
    <text evidence="1">Lipid metabolism; phospholipid metabolism.</text>
</comment>
<comment type="subunit">
    <text evidence="1">Probably interacts with PlsX.</text>
</comment>
<comment type="subcellular location">
    <subcellularLocation>
        <location evidence="1">Cell membrane</location>
        <topology evidence="1">Multi-pass membrane protein</topology>
    </subcellularLocation>
</comment>
<comment type="similarity">
    <text evidence="1">Belongs to the PlsY family.</text>
</comment>